<organism>
    <name type="scientific">Haemophilus influenzae (strain ATCC 51907 / DSM 11121 / KW20 / Rd)</name>
    <dbReference type="NCBI Taxonomy" id="71421"/>
    <lineage>
        <taxon>Bacteria</taxon>
        <taxon>Pseudomonadati</taxon>
        <taxon>Pseudomonadota</taxon>
        <taxon>Gammaproteobacteria</taxon>
        <taxon>Pasteurellales</taxon>
        <taxon>Pasteurellaceae</taxon>
        <taxon>Haemophilus</taxon>
    </lineage>
</organism>
<gene>
    <name evidence="1" type="primary">grpE</name>
    <name type="ordered locus">HI_0071</name>
</gene>
<dbReference type="EMBL" id="L42023">
    <property type="protein sequence ID" value="AAC21750.1"/>
    <property type="status" value="ALT_INIT"/>
    <property type="molecule type" value="Genomic_DNA"/>
</dbReference>
<dbReference type="PIR" id="I64046">
    <property type="entry name" value="I64046"/>
</dbReference>
<dbReference type="RefSeq" id="NP_438245.2">
    <property type="nucleotide sequence ID" value="NC_000907.1"/>
</dbReference>
<dbReference type="SMR" id="P43732"/>
<dbReference type="STRING" id="71421.HI_0071"/>
<dbReference type="EnsemblBacteria" id="AAC21750">
    <property type="protein sequence ID" value="AAC21750"/>
    <property type="gene ID" value="HI_0071"/>
</dbReference>
<dbReference type="KEGG" id="hin:HI_0071"/>
<dbReference type="PATRIC" id="fig|71421.8.peg.73"/>
<dbReference type="eggNOG" id="COG0576">
    <property type="taxonomic scope" value="Bacteria"/>
</dbReference>
<dbReference type="HOGENOM" id="CLU_057217_4_2_6"/>
<dbReference type="OrthoDB" id="9789811at2"/>
<dbReference type="PhylomeDB" id="P43732"/>
<dbReference type="Proteomes" id="UP000000579">
    <property type="component" value="Chromosome"/>
</dbReference>
<dbReference type="GO" id="GO:0005829">
    <property type="term" value="C:cytosol"/>
    <property type="evidence" value="ECO:0000318"/>
    <property type="project" value="GO_Central"/>
</dbReference>
<dbReference type="GO" id="GO:0000774">
    <property type="term" value="F:adenyl-nucleotide exchange factor activity"/>
    <property type="evidence" value="ECO:0000318"/>
    <property type="project" value="GO_Central"/>
</dbReference>
<dbReference type="GO" id="GO:0042803">
    <property type="term" value="F:protein homodimerization activity"/>
    <property type="evidence" value="ECO:0007669"/>
    <property type="project" value="InterPro"/>
</dbReference>
<dbReference type="GO" id="GO:0051087">
    <property type="term" value="F:protein-folding chaperone binding"/>
    <property type="evidence" value="ECO:0007669"/>
    <property type="project" value="InterPro"/>
</dbReference>
<dbReference type="GO" id="GO:0051082">
    <property type="term" value="F:unfolded protein binding"/>
    <property type="evidence" value="ECO:0000318"/>
    <property type="project" value="GO_Central"/>
</dbReference>
<dbReference type="GO" id="GO:0006457">
    <property type="term" value="P:protein folding"/>
    <property type="evidence" value="ECO:0007669"/>
    <property type="project" value="InterPro"/>
</dbReference>
<dbReference type="CDD" id="cd00446">
    <property type="entry name" value="GrpE"/>
    <property type="match status" value="1"/>
</dbReference>
<dbReference type="FunFam" id="2.30.22.10:FF:000001">
    <property type="entry name" value="Protein GrpE"/>
    <property type="match status" value="1"/>
</dbReference>
<dbReference type="FunFam" id="3.90.20.20:FF:000001">
    <property type="entry name" value="Protein GrpE"/>
    <property type="match status" value="1"/>
</dbReference>
<dbReference type="Gene3D" id="3.90.20.20">
    <property type="match status" value="1"/>
</dbReference>
<dbReference type="Gene3D" id="2.30.22.10">
    <property type="entry name" value="Head domain of nucleotide exchange factor GrpE"/>
    <property type="match status" value="1"/>
</dbReference>
<dbReference type="HAMAP" id="MF_01151">
    <property type="entry name" value="GrpE"/>
    <property type="match status" value="1"/>
</dbReference>
<dbReference type="InterPro" id="IPR000740">
    <property type="entry name" value="GrpE"/>
</dbReference>
<dbReference type="InterPro" id="IPR013805">
    <property type="entry name" value="GrpE_coiled_coil"/>
</dbReference>
<dbReference type="InterPro" id="IPR009012">
    <property type="entry name" value="GrpE_head"/>
</dbReference>
<dbReference type="NCBIfam" id="NF010738">
    <property type="entry name" value="PRK14140.1"/>
    <property type="match status" value="1"/>
</dbReference>
<dbReference type="NCBIfam" id="NF010748">
    <property type="entry name" value="PRK14150.1"/>
    <property type="match status" value="1"/>
</dbReference>
<dbReference type="PANTHER" id="PTHR21237">
    <property type="entry name" value="GRPE PROTEIN"/>
    <property type="match status" value="1"/>
</dbReference>
<dbReference type="PANTHER" id="PTHR21237:SF23">
    <property type="entry name" value="GRPE PROTEIN HOMOLOG, MITOCHONDRIAL"/>
    <property type="match status" value="1"/>
</dbReference>
<dbReference type="Pfam" id="PF01025">
    <property type="entry name" value="GrpE"/>
    <property type="match status" value="1"/>
</dbReference>
<dbReference type="PRINTS" id="PR00773">
    <property type="entry name" value="GRPEPROTEIN"/>
</dbReference>
<dbReference type="SUPFAM" id="SSF58014">
    <property type="entry name" value="Coiled-coil domain of nucleotide exchange factor GrpE"/>
    <property type="match status" value="1"/>
</dbReference>
<dbReference type="SUPFAM" id="SSF51064">
    <property type="entry name" value="Head domain of nucleotide exchange factor GrpE"/>
    <property type="match status" value="1"/>
</dbReference>
<dbReference type="PROSITE" id="PS01071">
    <property type="entry name" value="GRPE"/>
    <property type="match status" value="1"/>
</dbReference>
<keyword id="KW-0143">Chaperone</keyword>
<keyword id="KW-0963">Cytoplasm</keyword>
<keyword id="KW-1185">Reference proteome</keyword>
<keyword id="KW-0346">Stress response</keyword>
<feature type="chain" id="PRO_0000113793" description="Protein GrpE">
    <location>
        <begin position="1"/>
        <end position="198"/>
    </location>
</feature>
<feature type="region of interest" description="Disordered" evidence="2">
    <location>
        <begin position="1"/>
        <end position="33"/>
    </location>
</feature>
<feature type="compositionally biased region" description="Basic and acidic residues" evidence="2">
    <location>
        <begin position="1"/>
        <end position="18"/>
    </location>
</feature>
<name>GRPE_HAEIN</name>
<reference key="1">
    <citation type="journal article" date="1995" name="Science">
        <title>Whole-genome random sequencing and assembly of Haemophilus influenzae Rd.</title>
        <authorList>
            <person name="Fleischmann R.D."/>
            <person name="Adams M.D."/>
            <person name="White O."/>
            <person name="Clayton R.A."/>
            <person name="Kirkness E.F."/>
            <person name="Kerlavage A.R."/>
            <person name="Bult C.J."/>
            <person name="Tomb J.-F."/>
            <person name="Dougherty B.A."/>
            <person name="Merrick J.M."/>
            <person name="McKenney K."/>
            <person name="Sutton G.G."/>
            <person name="FitzHugh W."/>
            <person name="Fields C.A."/>
            <person name="Gocayne J.D."/>
            <person name="Scott J.D."/>
            <person name="Shirley R."/>
            <person name="Liu L.-I."/>
            <person name="Glodek A."/>
            <person name="Kelley J.M."/>
            <person name="Weidman J.F."/>
            <person name="Phillips C.A."/>
            <person name="Spriggs T."/>
            <person name="Hedblom E."/>
            <person name="Cotton M.D."/>
            <person name="Utterback T.R."/>
            <person name="Hanna M.C."/>
            <person name="Nguyen D.T."/>
            <person name="Saudek D.M."/>
            <person name="Brandon R.C."/>
            <person name="Fine L.D."/>
            <person name="Fritchman J.L."/>
            <person name="Fuhrmann J.L."/>
            <person name="Geoghagen N.S.M."/>
            <person name="Gnehm C.L."/>
            <person name="McDonald L.A."/>
            <person name="Small K.V."/>
            <person name="Fraser C.M."/>
            <person name="Smith H.O."/>
            <person name="Venter J.C."/>
        </authorList>
    </citation>
    <scope>NUCLEOTIDE SEQUENCE [LARGE SCALE GENOMIC DNA]</scope>
    <source>
        <strain>ATCC 51907 / DSM 11121 / KW20 / Rd</strain>
    </source>
</reference>
<proteinExistence type="inferred from homology"/>
<evidence type="ECO:0000255" key="1">
    <source>
        <dbReference type="HAMAP-Rule" id="MF_01151"/>
    </source>
</evidence>
<evidence type="ECO:0000256" key="2">
    <source>
        <dbReference type="SAM" id="MobiDB-lite"/>
    </source>
</evidence>
<evidence type="ECO:0000305" key="3"/>
<accession>P43732</accession>
<protein>
    <recommendedName>
        <fullName evidence="1">Protein GrpE</fullName>
    </recommendedName>
    <alternativeName>
        <fullName evidence="1">HSP-70 cofactor</fullName>
    </alternativeName>
</protein>
<sequence length="198" mass="22298">MSEQEQKVEIPEVEKQEEVVVEETQQAEHSQEFDPLEEAIARVQELEEQLKTQIEEAANKEQDILLRSRAEIENLRRRTEQDVEKAHKFALEKFSKDILNTIDNLERALATPANKEDESVKALFDGVELTLKELVSTVGRFGVEAVGVVGEAFNPDLHQAISMQPAEGFETNQISVVLQKGYTLNGRVIRPAMVMVAA</sequence>
<comment type="function">
    <text evidence="1">Participates actively in the response to hyperosmotic and heat shock by preventing the aggregation of stress-denatured proteins, in association with DnaK and GrpE. It is the nucleotide exchange factor for DnaK and may function as a thermosensor. Unfolded proteins bind initially to DnaJ; upon interaction with the DnaJ-bound protein, DnaK hydrolyzes its bound ATP, resulting in the formation of a stable complex. GrpE releases ADP from DnaK; ATP binding to DnaK triggers the release of the substrate protein, thus completing the reaction cycle. Several rounds of ATP-dependent interactions between DnaJ, DnaK and GrpE are required for fully efficient folding.</text>
</comment>
<comment type="subunit">
    <text evidence="1">Homodimer.</text>
</comment>
<comment type="subcellular location">
    <subcellularLocation>
        <location evidence="1">Cytoplasm</location>
    </subcellularLocation>
</comment>
<comment type="similarity">
    <text evidence="1">Belongs to the GrpE family.</text>
</comment>
<comment type="sequence caution" evidence="3">
    <conflict type="erroneous initiation">
        <sequence resource="EMBL-CDS" id="AAC21750"/>
    </conflict>
</comment>